<reference key="1">
    <citation type="journal article" date="2009" name="J. Bacteriol.">
        <title>Complete and draft genome sequences of six members of the Aquificales.</title>
        <authorList>
            <person name="Reysenbach A.-L."/>
            <person name="Hamamura N."/>
            <person name="Podar M."/>
            <person name="Griffiths E."/>
            <person name="Ferreira S."/>
            <person name="Hochstein R."/>
            <person name="Heidelberg J."/>
            <person name="Johnson J."/>
            <person name="Mead D."/>
            <person name="Pohorille A."/>
            <person name="Sarmiento M."/>
            <person name="Schweighofer K."/>
            <person name="Seshadri R."/>
            <person name="Voytek M.A."/>
        </authorList>
    </citation>
    <scope>NUCLEOTIDE SEQUENCE [LARGE SCALE GENOMIC DNA]</scope>
    <source>
        <strain>YO3AOP1</strain>
    </source>
</reference>
<dbReference type="EC" id="2.8.4.4" evidence="1"/>
<dbReference type="EMBL" id="CP001080">
    <property type="protein sequence ID" value="ACD66311.1"/>
    <property type="molecule type" value="Genomic_DNA"/>
</dbReference>
<dbReference type="RefSeq" id="WP_012459388.1">
    <property type="nucleotide sequence ID" value="NC_010730.1"/>
</dbReference>
<dbReference type="SMR" id="B2V8N8"/>
<dbReference type="STRING" id="436114.SYO3AOP1_0675"/>
<dbReference type="KEGG" id="sul:SYO3AOP1_0675"/>
<dbReference type="eggNOG" id="COG0621">
    <property type="taxonomic scope" value="Bacteria"/>
</dbReference>
<dbReference type="HOGENOM" id="CLU_018697_0_1_0"/>
<dbReference type="GO" id="GO:0005829">
    <property type="term" value="C:cytosol"/>
    <property type="evidence" value="ECO:0007669"/>
    <property type="project" value="TreeGrafter"/>
</dbReference>
<dbReference type="GO" id="GO:0051539">
    <property type="term" value="F:4 iron, 4 sulfur cluster binding"/>
    <property type="evidence" value="ECO:0007669"/>
    <property type="project" value="UniProtKB-UniRule"/>
</dbReference>
<dbReference type="GO" id="GO:0035599">
    <property type="term" value="F:aspartic acid methylthiotransferase activity"/>
    <property type="evidence" value="ECO:0007669"/>
    <property type="project" value="TreeGrafter"/>
</dbReference>
<dbReference type="GO" id="GO:0046872">
    <property type="term" value="F:metal ion binding"/>
    <property type="evidence" value="ECO:0007669"/>
    <property type="project" value="UniProtKB-KW"/>
</dbReference>
<dbReference type="GO" id="GO:0103039">
    <property type="term" value="F:protein methylthiotransferase activity"/>
    <property type="evidence" value="ECO:0007669"/>
    <property type="project" value="UniProtKB-EC"/>
</dbReference>
<dbReference type="GO" id="GO:0006400">
    <property type="term" value="P:tRNA modification"/>
    <property type="evidence" value="ECO:0007669"/>
    <property type="project" value="InterPro"/>
</dbReference>
<dbReference type="CDD" id="cd01335">
    <property type="entry name" value="Radical_SAM"/>
    <property type="match status" value="1"/>
</dbReference>
<dbReference type="FunFam" id="3.80.30.20:FF:000001">
    <property type="entry name" value="tRNA-2-methylthio-N(6)-dimethylallyladenosine synthase 2"/>
    <property type="match status" value="1"/>
</dbReference>
<dbReference type="Gene3D" id="3.40.50.12160">
    <property type="entry name" value="Methylthiotransferase, N-terminal domain"/>
    <property type="match status" value="1"/>
</dbReference>
<dbReference type="Gene3D" id="2.40.50.140">
    <property type="entry name" value="Nucleic acid-binding proteins"/>
    <property type="match status" value="1"/>
</dbReference>
<dbReference type="Gene3D" id="3.80.30.20">
    <property type="entry name" value="tm_1862 like domain"/>
    <property type="match status" value="1"/>
</dbReference>
<dbReference type="HAMAP" id="MF_01865">
    <property type="entry name" value="MTTase_RimO"/>
    <property type="match status" value="1"/>
</dbReference>
<dbReference type="InterPro" id="IPR006638">
    <property type="entry name" value="Elp3/MiaA/NifB-like_rSAM"/>
</dbReference>
<dbReference type="InterPro" id="IPR005839">
    <property type="entry name" value="Methylthiotransferase"/>
</dbReference>
<dbReference type="InterPro" id="IPR020612">
    <property type="entry name" value="Methylthiotransferase_CS"/>
</dbReference>
<dbReference type="InterPro" id="IPR013848">
    <property type="entry name" value="Methylthiotransferase_N"/>
</dbReference>
<dbReference type="InterPro" id="IPR038135">
    <property type="entry name" value="Methylthiotransferase_N_sf"/>
</dbReference>
<dbReference type="InterPro" id="IPR012340">
    <property type="entry name" value="NA-bd_OB-fold"/>
</dbReference>
<dbReference type="InterPro" id="IPR005840">
    <property type="entry name" value="Ribosomal_uS12_MeSTrfase_RimO"/>
</dbReference>
<dbReference type="InterPro" id="IPR007197">
    <property type="entry name" value="rSAM"/>
</dbReference>
<dbReference type="InterPro" id="IPR023404">
    <property type="entry name" value="rSAM_horseshoe"/>
</dbReference>
<dbReference type="InterPro" id="IPR002792">
    <property type="entry name" value="TRAM_dom"/>
</dbReference>
<dbReference type="NCBIfam" id="TIGR01125">
    <property type="entry name" value="30S ribosomal protein S12 methylthiotransferase RimO"/>
    <property type="match status" value="1"/>
</dbReference>
<dbReference type="NCBIfam" id="TIGR00089">
    <property type="entry name" value="MiaB/RimO family radical SAM methylthiotransferase"/>
    <property type="match status" value="1"/>
</dbReference>
<dbReference type="PANTHER" id="PTHR43837">
    <property type="entry name" value="RIBOSOMAL PROTEIN S12 METHYLTHIOTRANSFERASE RIMO"/>
    <property type="match status" value="1"/>
</dbReference>
<dbReference type="PANTHER" id="PTHR43837:SF1">
    <property type="entry name" value="RIBOSOMAL PROTEIN US12 METHYLTHIOTRANSFERASE RIMO"/>
    <property type="match status" value="1"/>
</dbReference>
<dbReference type="Pfam" id="PF04055">
    <property type="entry name" value="Radical_SAM"/>
    <property type="match status" value="1"/>
</dbReference>
<dbReference type="Pfam" id="PF18693">
    <property type="entry name" value="TRAM_2"/>
    <property type="match status" value="1"/>
</dbReference>
<dbReference type="Pfam" id="PF00919">
    <property type="entry name" value="UPF0004"/>
    <property type="match status" value="1"/>
</dbReference>
<dbReference type="SFLD" id="SFLDG01082">
    <property type="entry name" value="B12-binding_domain_containing"/>
    <property type="match status" value="1"/>
</dbReference>
<dbReference type="SFLD" id="SFLDG01061">
    <property type="entry name" value="methylthiotransferase"/>
    <property type="match status" value="1"/>
</dbReference>
<dbReference type="SFLD" id="SFLDF00274">
    <property type="entry name" value="ribosomal_protein_S12_methylth"/>
    <property type="match status" value="1"/>
</dbReference>
<dbReference type="SMART" id="SM00729">
    <property type="entry name" value="Elp3"/>
    <property type="match status" value="1"/>
</dbReference>
<dbReference type="SUPFAM" id="SSF102114">
    <property type="entry name" value="Radical SAM enzymes"/>
    <property type="match status" value="1"/>
</dbReference>
<dbReference type="PROSITE" id="PS51449">
    <property type="entry name" value="MTTASE_N"/>
    <property type="match status" value="1"/>
</dbReference>
<dbReference type="PROSITE" id="PS01278">
    <property type="entry name" value="MTTASE_RADICAL"/>
    <property type="match status" value="1"/>
</dbReference>
<dbReference type="PROSITE" id="PS51918">
    <property type="entry name" value="RADICAL_SAM"/>
    <property type="match status" value="1"/>
</dbReference>
<dbReference type="PROSITE" id="PS50926">
    <property type="entry name" value="TRAM"/>
    <property type="match status" value="1"/>
</dbReference>
<organism>
    <name type="scientific">Sulfurihydrogenibium sp. (strain YO3AOP1)</name>
    <dbReference type="NCBI Taxonomy" id="436114"/>
    <lineage>
        <taxon>Bacteria</taxon>
        <taxon>Pseudomonadati</taxon>
        <taxon>Aquificota</taxon>
        <taxon>Aquificia</taxon>
        <taxon>Aquificales</taxon>
        <taxon>Hydrogenothermaceae</taxon>
        <taxon>Sulfurihydrogenibium</taxon>
    </lineage>
</organism>
<sequence>MKNLKINFISLGCPKNLVDTEVLIGKLNQENISFTANPEEADVILINTCGFIEPAKEESIETILEAVKLKQNSNKKIIVTGCLVERYKQELEKEIPEVDYFIDLKNQSQIPVLFDIKPKENTKRIISTPKHTAYLKISEGCDHTCSFCAIPNIRGKHRSKPIEALVEEAKYLANLGVKELNIVSQDTSYYGYDLYGKPMLFELLQHLEKIDGIKWIRLYYLYPSTVDEDFFKFIKGSEKILHYIEMPIQHSEDKILKDMMRGYRKKKLYQILEWKEKYTPDMTIRSSVIVGYPTETEEDFENMKNFIQEAQFDWLGVFVYSHEEGTPAYQKHKDKIPKKEKIRRLNEISALQENITEQKNKSLIGKELDIIIDGFSEEWETLPIGRSYRSAFEIDGAVYVETTEPVNVGDIIKVRIKDTIDKYDVVGEAE</sequence>
<protein>
    <recommendedName>
        <fullName evidence="1">Ribosomal protein uS12 methylthiotransferase RimO</fullName>
        <shortName evidence="1">uS12 MTTase</shortName>
        <shortName evidence="1">uS12 methylthiotransferase</shortName>
        <ecNumber evidence="1">2.8.4.4</ecNumber>
    </recommendedName>
    <alternativeName>
        <fullName evidence="1">Ribosomal protein uS12 (aspartate-C(3))-methylthiotransferase</fullName>
    </alternativeName>
    <alternativeName>
        <fullName evidence="1">Ribosome maturation factor RimO</fullName>
    </alternativeName>
</protein>
<evidence type="ECO:0000255" key="1">
    <source>
        <dbReference type="HAMAP-Rule" id="MF_01865"/>
    </source>
</evidence>
<evidence type="ECO:0000255" key="2">
    <source>
        <dbReference type="PROSITE-ProRule" id="PRU01266"/>
    </source>
</evidence>
<gene>
    <name evidence="1" type="primary">rimO</name>
    <name type="ordered locus">SYO3AOP1_0675</name>
</gene>
<name>RIMO_SULSY</name>
<proteinExistence type="inferred from homology"/>
<comment type="function">
    <text evidence="1">Catalyzes the methylthiolation of an aspartic acid residue of ribosomal protein uS12.</text>
</comment>
<comment type="catalytic activity">
    <reaction evidence="1">
        <text>L-aspartate(89)-[ribosomal protein uS12]-hydrogen + (sulfur carrier)-SH + AH2 + 2 S-adenosyl-L-methionine = 3-methylsulfanyl-L-aspartate(89)-[ribosomal protein uS12]-hydrogen + (sulfur carrier)-H + 5'-deoxyadenosine + L-methionine + A + S-adenosyl-L-homocysteine + 2 H(+)</text>
        <dbReference type="Rhea" id="RHEA:37087"/>
        <dbReference type="Rhea" id="RHEA-COMP:10460"/>
        <dbReference type="Rhea" id="RHEA-COMP:10461"/>
        <dbReference type="Rhea" id="RHEA-COMP:14737"/>
        <dbReference type="Rhea" id="RHEA-COMP:14739"/>
        <dbReference type="ChEBI" id="CHEBI:13193"/>
        <dbReference type="ChEBI" id="CHEBI:15378"/>
        <dbReference type="ChEBI" id="CHEBI:17319"/>
        <dbReference type="ChEBI" id="CHEBI:17499"/>
        <dbReference type="ChEBI" id="CHEBI:29917"/>
        <dbReference type="ChEBI" id="CHEBI:29961"/>
        <dbReference type="ChEBI" id="CHEBI:57844"/>
        <dbReference type="ChEBI" id="CHEBI:57856"/>
        <dbReference type="ChEBI" id="CHEBI:59789"/>
        <dbReference type="ChEBI" id="CHEBI:64428"/>
        <dbReference type="ChEBI" id="CHEBI:73599"/>
        <dbReference type="EC" id="2.8.4.4"/>
    </reaction>
</comment>
<comment type="cofactor">
    <cofactor evidence="1">
        <name>[4Fe-4S] cluster</name>
        <dbReference type="ChEBI" id="CHEBI:49883"/>
    </cofactor>
    <text evidence="1">Binds 2 [4Fe-4S] clusters. One cluster is coordinated with 3 cysteines and an exchangeable S-adenosyl-L-methionine.</text>
</comment>
<comment type="subcellular location">
    <subcellularLocation>
        <location evidence="1">Cytoplasm</location>
    </subcellularLocation>
</comment>
<comment type="similarity">
    <text evidence="1">Belongs to the methylthiotransferase family. RimO subfamily.</text>
</comment>
<accession>B2V8N8</accession>
<feature type="chain" id="PRO_0000375025" description="Ribosomal protein uS12 methylthiotransferase RimO">
    <location>
        <begin position="1"/>
        <end position="430"/>
    </location>
</feature>
<feature type="domain" description="MTTase N-terminal" evidence="1">
    <location>
        <begin position="4"/>
        <end position="119"/>
    </location>
</feature>
<feature type="domain" description="Radical SAM core" evidence="2">
    <location>
        <begin position="127"/>
        <end position="358"/>
    </location>
</feature>
<feature type="domain" description="TRAM" evidence="1">
    <location>
        <begin position="361"/>
        <end position="430"/>
    </location>
</feature>
<feature type="binding site" evidence="1">
    <location>
        <position position="13"/>
    </location>
    <ligand>
        <name>[4Fe-4S] cluster</name>
        <dbReference type="ChEBI" id="CHEBI:49883"/>
        <label>1</label>
    </ligand>
</feature>
<feature type="binding site" evidence="1">
    <location>
        <position position="49"/>
    </location>
    <ligand>
        <name>[4Fe-4S] cluster</name>
        <dbReference type="ChEBI" id="CHEBI:49883"/>
        <label>1</label>
    </ligand>
</feature>
<feature type="binding site" evidence="1">
    <location>
        <position position="82"/>
    </location>
    <ligand>
        <name>[4Fe-4S] cluster</name>
        <dbReference type="ChEBI" id="CHEBI:49883"/>
        <label>1</label>
    </ligand>
</feature>
<feature type="binding site" evidence="1">
    <location>
        <position position="141"/>
    </location>
    <ligand>
        <name>[4Fe-4S] cluster</name>
        <dbReference type="ChEBI" id="CHEBI:49883"/>
        <label>2</label>
        <note>4Fe-4S-S-AdoMet</note>
    </ligand>
</feature>
<feature type="binding site" evidence="1">
    <location>
        <position position="145"/>
    </location>
    <ligand>
        <name>[4Fe-4S] cluster</name>
        <dbReference type="ChEBI" id="CHEBI:49883"/>
        <label>2</label>
        <note>4Fe-4S-S-AdoMet</note>
    </ligand>
</feature>
<feature type="binding site" evidence="1">
    <location>
        <position position="148"/>
    </location>
    <ligand>
        <name>[4Fe-4S] cluster</name>
        <dbReference type="ChEBI" id="CHEBI:49883"/>
        <label>2</label>
        <note>4Fe-4S-S-AdoMet</note>
    </ligand>
</feature>
<keyword id="KW-0004">4Fe-4S</keyword>
<keyword id="KW-0963">Cytoplasm</keyword>
<keyword id="KW-0408">Iron</keyword>
<keyword id="KW-0411">Iron-sulfur</keyword>
<keyword id="KW-0479">Metal-binding</keyword>
<keyword id="KW-0949">S-adenosyl-L-methionine</keyword>
<keyword id="KW-0808">Transferase</keyword>